<comment type="function">
    <text evidence="2">Cell wall formation.</text>
</comment>
<comment type="catalytic activity">
    <reaction evidence="2">
        <text>2 D-alanine + ATP = D-alanyl-D-alanine + ADP + phosphate + H(+)</text>
        <dbReference type="Rhea" id="RHEA:11224"/>
        <dbReference type="ChEBI" id="CHEBI:15378"/>
        <dbReference type="ChEBI" id="CHEBI:30616"/>
        <dbReference type="ChEBI" id="CHEBI:43474"/>
        <dbReference type="ChEBI" id="CHEBI:57416"/>
        <dbReference type="ChEBI" id="CHEBI:57822"/>
        <dbReference type="ChEBI" id="CHEBI:456216"/>
        <dbReference type="EC" id="6.3.2.4"/>
    </reaction>
</comment>
<comment type="cofactor">
    <cofactor evidence="1">
        <name>Mg(2+)</name>
        <dbReference type="ChEBI" id="CHEBI:18420"/>
    </cofactor>
    <cofactor evidence="1">
        <name>Mn(2+)</name>
        <dbReference type="ChEBI" id="CHEBI:29035"/>
    </cofactor>
    <text evidence="1">Binds 2 magnesium or manganese ions per subunit.</text>
</comment>
<comment type="pathway">
    <text evidence="2">Cell wall biogenesis; peptidoglycan biosynthesis.</text>
</comment>
<comment type="subcellular location">
    <subcellularLocation>
        <location evidence="2">Cytoplasm</location>
    </subcellularLocation>
</comment>
<comment type="similarity">
    <text evidence="2">Belongs to the D-alanine--D-alanine ligase family.</text>
</comment>
<organism>
    <name type="scientific">Corynebacterium urealyticum (strain ATCC 43042 / DSM 7109)</name>
    <dbReference type="NCBI Taxonomy" id="504474"/>
    <lineage>
        <taxon>Bacteria</taxon>
        <taxon>Bacillati</taxon>
        <taxon>Actinomycetota</taxon>
        <taxon>Actinomycetes</taxon>
        <taxon>Mycobacteriales</taxon>
        <taxon>Corynebacteriaceae</taxon>
        <taxon>Corynebacterium</taxon>
    </lineage>
</organism>
<gene>
    <name evidence="2" type="primary">ddl</name>
    <name type="ordered locus">cu0778</name>
</gene>
<accession>B1VG49</accession>
<feature type="chain" id="PRO_1000091177" description="D-alanine--D-alanine ligase">
    <location>
        <begin position="1"/>
        <end position="362"/>
    </location>
</feature>
<feature type="domain" description="ATP-grasp" evidence="2">
    <location>
        <begin position="153"/>
        <end position="357"/>
    </location>
</feature>
<feature type="binding site" evidence="2">
    <location>
        <begin position="180"/>
        <end position="235"/>
    </location>
    <ligand>
        <name>ATP</name>
        <dbReference type="ChEBI" id="CHEBI:30616"/>
    </ligand>
</feature>
<feature type="binding site" evidence="2">
    <location>
        <position position="312"/>
    </location>
    <ligand>
        <name>Mg(2+)</name>
        <dbReference type="ChEBI" id="CHEBI:18420"/>
        <label>1</label>
    </ligand>
</feature>
<feature type="binding site" evidence="2">
    <location>
        <position position="324"/>
    </location>
    <ligand>
        <name>Mg(2+)</name>
        <dbReference type="ChEBI" id="CHEBI:18420"/>
        <label>1</label>
    </ligand>
</feature>
<feature type="binding site" evidence="2">
    <location>
        <position position="324"/>
    </location>
    <ligand>
        <name>Mg(2+)</name>
        <dbReference type="ChEBI" id="CHEBI:18420"/>
        <label>2</label>
    </ligand>
</feature>
<feature type="binding site" evidence="2">
    <location>
        <position position="326"/>
    </location>
    <ligand>
        <name>Mg(2+)</name>
        <dbReference type="ChEBI" id="CHEBI:18420"/>
        <label>2</label>
    </ligand>
</feature>
<proteinExistence type="inferred from homology"/>
<evidence type="ECO:0000250" key="1"/>
<evidence type="ECO:0000255" key="2">
    <source>
        <dbReference type="HAMAP-Rule" id="MF_00047"/>
    </source>
</evidence>
<name>DDL_CORU7</name>
<reference key="1">
    <citation type="journal article" date="2008" name="J. Biotechnol.">
        <title>The lifestyle of Corynebacterium urealyticum derived from its complete genome sequence established by pyrosequencing.</title>
        <authorList>
            <person name="Tauch A."/>
            <person name="Trost E."/>
            <person name="Tilker A."/>
            <person name="Ludewig U."/>
            <person name="Schneiker S."/>
            <person name="Goesmann A."/>
            <person name="Arnold W."/>
            <person name="Bekel T."/>
            <person name="Brinkrolf K."/>
            <person name="Brune I."/>
            <person name="Goetker S."/>
            <person name="Kalinowski J."/>
            <person name="Kamp P.-B."/>
            <person name="Lobo F.P."/>
            <person name="Viehoever P."/>
            <person name="Weisshaar B."/>
            <person name="Soriano F."/>
            <person name="Droege M."/>
            <person name="Puehler A."/>
        </authorList>
    </citation>
    <scope>NUCLEOTIDE SEQUENCE [LARGE SCALE GENOMIC DNA]</scope>
    <source>
        <strain>ATCC 43042 / DSM 7109</strain>
    </source>
</reference>
<keyword id="KW-0067">ATP-binding</keyword>
<keyword id="KW-0133">Cell shape</keyword>
<keyword id="KW-0961">Cell wall biogenesis/degradation</keyword>
<keyword id="KW-0963">Cytoplasm</keyword>
<keyword id="KW-0436">Ligase</keyword>
<keyword id="KW-0460">Magnesium</keyword>
<keyword id="KW-0464">Manganese</keyword>
<keyword id="KW-0479">Metal-binding</keyword>
<keyword id="KW-0547">Nucleotide-binding</keyword>
<keyword id="KW-0573">Peptidoglycan synthesis</keyword>
<keyword id="KW-1185">Reference proteome</keyword>
<dbReference type="EC" id="6.3.2.4" evidence="2"/>
<dbReference type="EMBL" id="AM942444">
    <property type="protein sequence ID" value="CAQ04738.1"/>
    <property type="molecule type" value="Genomic_DNA"/>
</dbReference>
<dbReference type="RefSeq" id="WP_012360027.1">
    <property type="nucleotide sequence ID" value="NC_010545.1"/>
</dbReference>
<dbReference type="SMR" id="B1VG49"/>
<dbReference type="STRING" id="504474.cu0778"/>
<dbReference type="GeneID" id="60603556"/>
<dbReference type="KEGG" id="cur:cu0778"/>
<dbReference type="eggNOG" id="COG1181">
    <property type="taxonomic scope" value="Bacteria"/>
</dbReference>
<dbReference type="HOGENOM" id="CLU_039268_0_1_11"/>
<dbReference type="UniPathway" id="UPA00219"/>
<dbReference type="Proteomes" id="UP000001727">
    <property type="component" value="Chromosome"/>
</dbReference>
<dbReference type="GO" id="GO:0005829">
    <property type="term" value="C:cytosol"/>
    <property type="evidence" value="ECO:0007669"/>
    <property type="project" value="TreeGrafter"/>
</dbReference>
<dbReference type="GO" id="GO:0005524">
    <property type="term" value="F:ATP binding"/>
    <property type="evidence" value="ECO:0007669"/>
    <property type="project" value="UniProtKB-KW"/>
</dbReference>
<dbReference type="GO" id="GO:0008716">
    <property type="term" value="F:D-alanine-D-alanine ligase activity"/>
    <property type="evidence" value="ECO:0007669"/>
    <property type="project" value="UniProtKB-UniRule"/>
</dbReference>
<dbReference type="GO" id="GO:0046872">
    <property type="term" value="F:metal ion binding"/>
    <property type="evidence" value="ECO:0007669"/>
    <property type="project" value="UniProtKB-KW"/>
</dbReference>
<dbReference type="GO" id="GO:0071555">
    <property type="term" value="P:cell wall organization"/>
    <property type="evidence" value="ECO:0007669"/>
    <property type="project" value="UniProtKB-KW"/>
</dbReference>
<dbReference type="GO" id="GO:0009252">
    <property type="term" value="P:peptidoglycan biosynthetic process"/>
    <property type="evidence" value="ECO:0007669"/>
    <property type="project" value="UniProtKB-UniRule"/>
</dbReference>
<dbReference type="GO" id="GO:0008360">
    <property type="term" value="P:regulation of cell shape"/>
    <property type="evidence" value="ECO:0007669"/>
    <property type="project" value="UniProtKB-KW"/>
</dbReference>
<dbReference type="FunFam" id="3.30.470.20:FF:000008">
    <property type="entry name" value="D-alanine--D-alanine ligase"/>
    <property type="match status" value="1"/>
</dbReference>
<dbReference type="Gene3D" id="3.40.50.20">
    <property type="match status" value="1"/>
</dbReference>
<dbReference type="Gene3D" id="3.30.1490.20">
    <property type="entry name" value="ATP-grasp fold, A domain"/>
    <property type="match status" value="1"/>
</dbReference>
<dbReference type="Gene3D" id="3.30.470.20">
    <property type="entry name" value="ATP-grasp fold, B domain"/>
    <property type="match status" value="1"/>
</dbReference>
<dbReference type="HAMAP" id="MF_00047">
    <property type="entry name" value="Dala_Dala_lig"/>
    <property type="match status" value="1"/>
</dbReference>
<dbReference type="InterPro" id="IPR011761">
    <property type="entry name" value="ATP-grasp"/>
</dbReference>
<dbReference type="InterPro" id="IPR013815">
    <property type="entry name" value="ATP_grasp_subdomain_1"/>
</dbReference>
<dbReference type="InterPro" id="IPR000291">
    <property type="entry name" value="D-Ala_lig_Van_CS"/>
</dbReference>
<dbReference type="InterPro" id="IPR005905">
    <property type="entry name" value="D_ala_D_ala"/>
</dbReference>
<dbReference type="InterPro" id="IPR011095">
    <property type="entry name" value="Dala_Dala_lig_C"/>
</dbReference>
<dbReference type="InterPro" id="IPR011127">
    <property type="entry name" value="Dala_Dala_lig_N"/>
</dbReference>
<dbReference type="InterPro" id="IPR016185">
    <property type="entry name" value="PreATP-grasp_dom_sf"/>
</dbReference>
<dbReference type="NCBIfam" id="TIGR01205">
    <property type="entry name" value="D_ala_D_alaTIGR"/>
    <property type="match status" value="1"/>
</dbReference>
<dbReference type="NCBIfam" id="NF002528">
    <property type="entry name" value="PRK01966.1-4"/>
    <property type="match status" value="1"/>
</dbReference>
<dbReference type="PANTHER" id="PTHR23132">
    <property type="entry name" value="D-ALANINE--D-ALANINE LIGASE"/>
    <property type="match status" value="1"/>
</dbReference>
<dbReference type="PANTHER" id="PTHR23132:SF25">
    <property type="entry name" value="D-ALANINE--D-ALANINE LIGASE A"/>
    <property type="match status" value="1"/>
</dbReference>
<dbReference type="Pfam" id="PF07478">
    <property type="entry name" value="Dala_Dala_lig_C"/>
    <property type="match status" value="1"/>
</dbReference>
<dbReference type="Pfam" id="PF01820">
    <property type="entry name" value="Dala_Dala_lig_N"/>
    <property type="match status" value="1"/>
</dbReference>
<dbReference type="PIRSF" id="PIRSF039102">
    <property type="entry name" value="Ddl/VanB"/>
    <property type="match status" value="1"/>
</dbReference>
<dbReference type="SUPFAM" id="SSF56059">
    <property type="entry name" value="Glutathione synthetase ATP-binding domain-like"/>
    <property type="match status" value="1"/>
</dbReference>
<dbReference type="SUPFAM" id="SSF52440">
    <property type="entry name" value="PreATP-grasp domain"/>
    <property type="match status" value="1"/>
</dbReference>
<dbReference type="PROSITE" id="PS50975">
    <property type="entry name" value="ATP_GRASP"/>
    <property type="match status" value="1"/>
</dbReference>
<dbReference type="PROSITE" id="PS00843">
    <property type="entry name" value="DALA_DALA_LIGASE_1"/>
    <property type="match status" value="1"/>
</dbReference>
<dbReference type="PROSITE" id="PS00844">
    <property type="entry name" value="DALA_DALA_LIGASE_2"/>
    <property type="match status" value="1"/>
</dbReference>
<sequence>MTAAEKLTVAVVYGGQSTEHSVSCISAGAIIDNLDPERFTVVPVGITNGGAWVPGATDTAQLRASGRELPTVADHGEHIQPMLGAAGEATEFRFVTGDRAGDVFATADVIFPVLHGANGEDGTIQGLFDLLGARYVGNGVLASAAGMDKEFTKKIAREAGIPTGPEVVLHGRTELTDHERELLGLPVFVKPARGGSSIGISKVDSWRDLPAAIEEAASHDPKVIIEAMITGPEVECGVLEREDGTLVASSPAMLEGTDAGEEGFYGFDAKYLDDTVSATIPAPLDEETTRRVQQLAIETYRALGCTGLARVDFFVTDAGPVLNEINTMPGFTPISMYPQMFLADGVSYADLLTTLVSGARRH</sequence>
<protein>
    <recommendedName>
        <fullName evidence="2">D-alanine--D-alanine ligase</fullName>
        <ecNumber evidence="2">6.3.2.4</ecNumber>
    </recommendedName>
    <alternativeName>
        <fullName evidence="2">D-Ala-D-Ala ligase</fullName>
    </alternativeName>
    <alternativeName>
        <fullName evidence="2">D-alanylalanine synthetase</fullName>
    </alternativeName>
</protein>